<comment type="function">
    <text evidence="1 8">Methyltransferase; part of the gene cluster that mediates the biosynthesis of strobilurin A, an antifungal polyketide that contains a key beta-methoxyacrylate toxophore that targets the complex III of the mitochondrial electron transport chain (PubMed:30258052). Strobilurin biosynthesis begins with construction of benzoyl CoA by step-wise elimination of ammonia from phenylalanine by the phenylalanine ammonia-lyase str11, oxygenation by str8 and retro-Claisen reaction to form benzoic acid, which is activated to its CoA thiolester benzoyl CoA by the dedicated CoA ligase str10 (PubMed:30258052). Benzoyl CoA forms the starter unit for the highly reducing polyketide synthase stpks1 that produces the polyketide prestrobilutin A (PubMed:30258052). The FAD-dependent oxygenase str9 then catalyzes the key oxidative rearrangement responsible for the creation of the beta-methoxyacrylate toxophore (PubMed:30258052). Str9 performs epoxidation of the 2,3 olefin of prestrobilutin A, followed by Meinwald rearrangement to furnish the aldehyde intermediate (Probable). Rapid enolization of the aldehyde intermediate would give the beta-methoxyacrylate skeleton and methylations catalyzed by str2 and str3 complete the synthesis and lead to the production of strobilurin A (Probable). The short-chain dehydrogenase stl2 and the dehydrogenase str4 play a role in the shunt pathway leading to the production of bolineol (PubMed:30258052). The cluster encodes no obvious halogenase gene that could be involved in production of strobilurin B, nor any obvious dimethylallyl-transferase that could be involved in the production of strobilurin G (Probable). It is possible that unknown proteins encoded in, or near, the cluster (such as str1 or stl1) may form new classes of halogenases or dimethylally-transferases, or that the responsible genes are located elsewhere on the genome (Probable). Similarly, proteins encoded by str5/str6 hydrolases appear to have no chemical role in the biosynthesis of strobilurin A (Probable). Finally, no obvious self-resistance gene is found within the cluster (Probable).</text>
</comment>
<comment type="pathway">
    <text evidence="8">Mycotoxin biosynthesis.</text>
</comment>
<comment type="induction">
    <text evidence="1">Induced in strobilurin-producing conditions (on CGC medium after 6 days of growth).</text>
</comment>
<comment type="biotechnology">
    <text evidence="2 3 4 5 6">The structure of strobilurin A was used for the development of the major class of beta-methoxyacrylate agricultural fungicides since its beta-methoxyacrylate toxophore targets the Qo site of complex III of the mitochondrial electron transport chain and prevents adenosine triphosphate synthesis (PubMed:563391, PubMed:6271595). Compounds such as azoxystrobin (Syngenta) and Kresoxim methyl (BASF) are among the most widely used fungicides worldwide (PubMed:12146165, PubMed:29711574). This class of antifungals are used as effective treatments against a broad range of destructive fungal plant pathogens and make significant contributions to food security (PubMed:12146165, PubMed:29711574). The strobilurin fungicides are estimated to have been worth 3.4 billion dollars in 2015 and they make up 25% of the fungicide market and 6.7% of the total crop protection market (PubMed:30258052).</text>
</comment>
<comment type="similarity">
    <text evidence="7">Belongs to the methyltransferase superfamily. LaeA methyltransferase family.</text>
</comment>
<accession>A0A3B1EFP8</accession>
<protein>
    <recommendedName>
        <fullName evidence="6">Methyltransferase str3</fullName>
        <ecNumber evidence="8">2.1.1.-</ecNumber>
    </recommendedName>
    <alternativeName>
        <fullName evidence="6">Strobilurin A biosynthesis cluster protein r3</fullName>
    </alternativeName>
</protein>
<reference key="1">
    <citation type="journal article" date="2018" name="Nat. Commun.">
        <title>Strobilurin biosynthesis in Basidiomycete fungi.</title>
        <authorList>
            <person name="Nofiani R."/>
            <person name="de Mattos-Shipley K."/>
            <person name="Lebe K.E."/>
            <person name="Han L.C."/>
            <person name="Iqbal Z."/>
            <person name="Bailey A.M."/>
            <person name="Willis C.L."/>
            <person name="Simpson T.J."/>
            <person name="Cox R.J."/>
        </authorList>
    </citation>
    <scope>NUCLEOTIDE SEQUENCE [GENOMIC DNA]</scope>
    <scope>INDUCTION</scope>
    <scope>FUNCTION</scope>
    <scope>PATHWAY</scope>
    <scope>BIOTECHNOLOGY</scope>
    <source>
        <strain>CBS 621.79</strain>
    </source>
</reference>
<reference key="2">
    <citation type="journal article" date="1977" name="J. Antibiot.">
        <title>The strobilurins--new antifungal antibiotics from the basidiomycete Strobilurus tenacellus.</title>
        <authorList>
            <person name="Anke T."/>
            <person name="Oberwinkler F."/>
            <person name="Steglich W."/>
            <person name="Schramm G."/>
        </authorList>
    </citation>
    <scope>BIOTECHNOLOGY</scope>
</reference>
<reference key="3">
    <citation type="journal article" date="1981" name="FEBS Lett.">
        <title>Oudemansin, strobilurin A, strobilurin B and myxothiazol: new inhibitors of the bc1 segment of the respiratory chain with an E-beta-methoxyacrylate system as common structural element.</title>
        <authorList>
            <person name="Becker W.F."/>
            <person name="von Jagow G."/>
            <person name="Anke T."/>
            <person name="Steglich W."/>
        </authorList>
    </citation>
    <scope>BIOTECHNOLOGY</scope>
</reference>
<reference key="4">
    <citation type="journal article" date="1999" name="Angew. Chem. Int. Ed.">
        <title>Strobilurins: evolution of a new class of active substances.</title>
        <authorList>
            <person name="Sauter H."/>
            <person name="Steglich W."/>
            <person name="Anke T."/>
        </authorList>
    </citation>
    <scope>REVIEW ON BIOTECHNOLOGY</scope>
</reference>
<reference key="5">
    <citation type="journal article" date="2002" name="Pest Manag. Sci.">
        <title>The strobilurin fungicides.</title>
        <authorList>
            <person name="Bartlett D.W."/>
            <person name="Clough J.M."/>
            <person name="Godwin J.R."/>
            <person name="Hall A.A."/>
            <person name="Hamer M."/>
            <person name="Parr-Dobrzanski B."/>
        </authorList>
    </citation>
    <scope>REVIEW ON BIOTECHNOLOGY</scope>
</reference>
<dbReference type="EC" id="2.1.1.-" evidence="8"/>
<dbReference type="EMBL" id="KY070339">
    <property type="protein sequence ID" value="ATV82113.1"/>
    <property type="molecule type" value="Genomic_DNA"/>
</dbReference>
<dbReference type="GO" id="GO:0008168">
    <property type="term" value="F:methyltransferase activity"/>
    <property type="evidence" value="ECO:0007669"/>
    <property type="project" value="UniProtKB-KW"/>
</dbReference>
<dbReference type="GO" id="GO:0032259">
    <property type="term" value="P:methylation"/>
    <property type="evidence" value="ECO:0007669"/>
    <property type="project" value="UniProtKB-KW"/>
</dbReference>
<dbReference type="CDD" id="cd02440">
    <property type="entry name" value="AdoMet_MTases"/>
    <property type="match status" value="1"/>
</dbReference>
<dbReference type="Gene3D" id="3.40.50.150">
    <property type="entry name" value="Vaccinia Virus protein VP39"/>
    <property type="match status" value="1"/>
</dbReference>
<dbReference type="InterPro" id="IPR029063">
    <property type="entry name" value="SAM-dependent_MTases_sf"/>
</dbReference>
<dbReference type="PANTHER" id="PTHR43591">
    <property type="entry name" value="METHYLTRANSFERASE"/>
    <property type="match status" value="1"/>
</dbReference>
<dbReference type="Pfam" id="PF13489">
    <property type="entry name" value="Methyltransf_23"/>
    <property type="match status" value="1"/>
</dbReference>
<dbReference type="SUPFAM" id="SSF53335">
    <property type="entry name" value="S-adenosyl-L-methionine-dependent methyltransferases"/>
    <property type="match status" value="1"/>
</dbReference>
<proteinExistence type="evidence at protein level"/>
<organism>
    <name type="scientific">Strobilurus tenacellus</name>
    <dbReference type="NCBI Taxonomy" id="41251"/>
    <lineage>
        <taxon>Eukaryota</taxon>
        <taxon>Fungi</taxon>
        <taxon>Dikarya</taxon>
        <taxon>Basidiomycota</taxon>
        <taxon>Agaricomycotina</taxon>
        <taxon>Agaricomycetes</taxon>
        <taxon>Agaricomycetidae</taxon>
        <taxon>Agaricales</taxon>
        <taxon>Marasmiineae</taxon>
        <taxon>Physalacriaceae</taxon>
        <taxon>Strobilurus</taxon>
    </lineage>
</organism>
<name>STR3_STRTC</name>
<gene>
    <name evidence="6" type="primary">str3</name>
</gene>
<evidence type="ECO:0000269" key="1">
    <source>
    </source>
</evidence>
<evidence type="ECO:0000269" key="2">
    <source>
    </source>
</evidence>
<evidence type="ECO:0000269" key="3">
    <source>
    </source>
</evidence>
<evidence type="ECO:0000303" key="4">
    <source>
    </source>
</evidence>
<evidence type="ECO:0000303" key="5">
    <source>
    </source>
</evidence>
<evidence type="ECO:0000303" key="6">
    <source>
    </source>
</evidence>
<evidence type="ECO:0000305" key="7"/>
<evidence type="ECO:0000305" key="8">
    <source>
    </source>
</evidence>
<feature type="chain" id="PRO_0000449340" description="Methyltransferase str3">
    <location>
        <begin position="1"/>
        <end position="277"/>
    </location>
</feature>
<sequence>MSSPAAQTPYALVPTDAEWERLDAQHNGIAKFLDHKLAPVDLGQPKKILEIGSGSGAWAIQAAKQFPDADVLAVDQNPLPARPLPSNIRFQQLNVLEPFPFPPGSFDIVHIRFVLCHLPNGYTVLPRIIELVAPGGWLLVDDIDFLHAFEGLDKAPGVKSGFTGLIKSMESHDADPHFGKTLKGLLESSSALSEVNVQKVELPINPTPEXPALGPLSRTMRQAFSNAVGAEKLNPDTVTKGGLTREVQQAFLNEMGGDAQDWSYSVHLYFSWSQKRV</sequence>
<keyword id="KW-0489">Methyltransferase</keyword>
<keyword id="KW-0808">Transferase</keyword>